<dbReference type="EC" id="4.3.2.1" evidence="1"/>
<dbReference type="EMBL" id="AE008691">
    <property type="protein sequence ID" value="AAM25623.1"/>
    <property type="molecule type" value="Genomic_DNA"/>
</dbReference>
<dbReference type="RefSeq" id="WP_011026507.1">
    <property type="nucleotide sequence ID" value="NC_003869.1"/>
</dbReference>
<dbReference type="SMR" id="Q8R7C3"/>
<dbReference type="STRING" id="273068.TTE2493"/>
<dbReference type="KEGG" id="tte:TTE2493"/>
<dbReference type="eggNOG" id="COG0165">
    <property type="taxonomic scope" value="Bacteria"/>
</dbReference>
<dbReference type="HOGENOM" id="CLU_027272_2_3_9"/>
<dbReference type="OrthoDB" id="9769623at2"/>
<dbReference type="UniPathway" id="UPA00068">
    <property type="reaction ID" value="UER00114"/>
</dbReference>
<dbReference type="Proteomes" id="UP000000555">
    <property type="component" value="Chromosome"/>
</dbReference>
<dbReference type="GO" id="GO:0005829">
    <property type="term" value="C:cytosol"/>
    <property type="evidence" value="ECO:0007669"/>
    <property type="project" value="TreeGrafter"/>
</dbReference>
<dbReference type="GO" id="GO:0004056">
    <property type="term" value="F:argininosuccinate lyase activity"/>
    <property type="evidence" value="ECO:0007669"/>
    <property type="project" value="UniProtKB-UniRule"/>
</dbReference>
<dbReference type="GO" id="GO:0042450">
    <property type="term" value="P:arginine biosynthetic process via ornithine"/>
    <property type="evidence" value="ECO:0007669"/>
    <property type="project" value="InterPro"/>
</dbReference>
<dbReference type="GO" id="GO:0006526">
    <property type="term" value="P:L-arginine biosynthetic process"/>
    <property type="evidence" value="ECO:0007669"/>
    <property type="project" value="UniProtKB-UniRule"/>
</dbReference>
<dbReference type="CDD" id="cd01359">
    <property type="entry name" value="Argininosuccinate_lyase"/>
    <property type="match status" value="1"/>
</dbReference>
<dbReference type="FunFam" id="1.10.275.10:FF:000002">
    <property type="entry name" value="Argininosuccinate lyase"/>
    <property type="match status" value="1"/>
</dbReference>
<dbReference type="FunFam" id="1.10.40.30:FF:000001">
    <property type="entry name" value="Argininosuccinate lyase"/>
    <property type="match status" value="1"/>
</dbReference>
<dbReference type="FunFam" id="1.20.200.10:FF:000006">
    <property type="entry name" value="Argininosuccinate lyase"/>
    <property type="match status" value="1"/>
</dbReference>
<dbReference type="Gene3D" id="1.10.40.30">
    <property type="entry name" value="Fumarase/aspartase (C-terminal domain)"/>
    <property type="match status" value="1"/>
</dbReference>
<dbReference type="Gene3D" id="1.20.200.10">
    <property type="entry name" value="Fumarase/aspartase (Central domain)"/>
    <property type="match status" value="1"/>
</dbReference>
<dbReference type="Gene3D" id="1.10.275.10">
    <property type="entry name" value="Fumarase/aspartase (N-terminal domain)"/>
    <property type="match status" value="1"/>
</dbReference>
<dbReference type="HAMAP" id="MF_00006">
    <property type="entry name" value="Arg_succ_lyase"/>
    <property type="match status" value="1"/>
</dbReference>
<dbReference type="InterPro" id="IPR029419">
    <property type="entry name" value="Arg_succ_lyase_C"/>
</dbReference>
<dbReference type="InterPro" id="IPR009049">
    <property type="entry name" value="Argininosuccinate_lyase"/>
</dbReference>
<dbReference type="InterPro" id="IPR024083">
    <property type="entry name" value="Fumarase/histidase_N"/>
</dbReference>
<dbReference type="InterPro" id="IPR020557">
    <property type="entry name" value="Fumarate_lyase_CS"/>
</dbReference>
<dbReference type="InterPro" id="IPR000362">
    <property type="entry name" value="Fumarate_lyase_fam"/>
</dbReference>
<dbReference type="InterPro" id="IPR022761">
    <property type="entry name" value="Fumarate_lyase_N"/>
</dbReference>
<dbReference type="InterPro" id="IPR008948">
    <property type="entry name" value="L-Aspartase-like"/>
</dbReference>
<dbReference type="NCBIfam" id="TIGR00838">
    <property type="entry name" value="argH"/>
    <property type="match status" value="1"/>
</dbReference>
<dbReference type="PANTHER" id="PTHR43814">
    <property type="entry name" value="ARGININOSUCCINATE LYASE"/>
    <property type="match status" value="1"/>
</dbReference>
<dbReference type="PANTHER" id="PTHR43814:SF1">
    <property type="entry name" value="ARGININOSUCCINATE LYASE"/>
    <property type="match status" value="1"/>
</dbReference>
<dbReference type="Pfam" id="PF14698">
    <property type="entry name" value="ASL_C2"/>
    <property type="match status" value="1"/>
</dbReference>
<dbReference type="Pfam" id="PF00206">
    <property type="entry name" value="Lyase_1"/>
    <property type="match status" value="1"/>
</dbReference>
<dbReference type="PRINTS" id="PR00145">
    <property type="entry name" value="ARGSUCLYASE"/>
</dbReference>
<dbReference type="PRINTS" id="PR00149">
    <property type="entry name" value="FUMRATELYASE"/>
</dbReference>
<dbReference type="SUPFAM" id="SSF48557">
    <property type="entry name" value="L-aspartase-like"/>
    <property type="match status" value="1"/>
</dbReference>
<dbReference type="PROSITE" id="PS00163">
    <property type="entry name" value="FUMARATE_LYASES"/>
    <property type="match status" value="1"/>
</dbReference>
<accession>Q8R7C3</accession>
<reference key="1">
    <citation type="journal article" date="2002" name="Genome Res.">
        <title>A complete sequence of the T. tengcongensis genome.</title>
        <authorList>
            <person name="Bao Q."/>
            <person name="Tian Y."/>
            <person name="Li W."/>
            <person name="Xu Z."/>
            <person name="Xuan Z."/>
            <person name="Hu S."/>
            <person name="Dong W."/>
            <person name="Yang J."/>
            <person name="Chen Y."/>
            <person name="Xue Y."/>
            <person name="Xu Y."/>
            <person name="Lai X."/>
            <person name="Huang L."/>
            <person name="Dong X."/>
            <person name="Ma Y."/>
            <person name="Ling L."/>
            <person name="Tan H."/>
            <person name="Chen R."/>
            <person name="Wang J."/>
            <person name="Yu J."/>
            <person name="Yang H."/>
        </authorList>
    </citation>
    <scope>NUCLEOTIDE SEQUENCE [LARGE SCALE GENOMIC DNA]</scope>
    <source>
        <strain>DSM 15242 / JCM 11007 / NBRC 100824 / MB4</strain>
    </source>
</reference>
<keyword id="KW-0028">Amino-acid biosynthesis</keyword>
<keyword id="KW-0055">Arginine biosynthesis</keyword>
<keyword id="KW-0963">Cytoplasm</keyword>
<keyword id="KW-0456">Lyase</keyword>
<keyword id="KW-1185">Reference proteome</keyword>
<organism>
    <name type="scientific">Caldanaerobacter subterraneus subsp. tengcongensis (strain DSM 15242 / JCM 11007 / NBRC 100824 / MB4)</name>
    <name type="common">Thermoanaerobacter tengcongensis</name>
    <dbReference type="NCBI Taxonomy" id="273068"/>
    <lineage>
        <taxon>Bacteria</taxon>
        <taxon>Bacillati</taxon>
        <taxon>Bacillota</taxon>
        <taxon>Clostridia</taxon>
        <taxon>Thermoanaerobacterales</taxon>
        <taxon>Thermoanaerobacteraceae</taxon>
        <taxon>Caldanaerobacter</taxon>
    </lineage>
</organism>
<feature type="chain" id="PRO_0000137844" description="Argininosuccinate lyase">
    <location>
        <begin position="1"/>
        <end position="439"/>
    </location>
</feature>
<name>ARLY_CALS4</name>
<protein>
    <recommendedName>
        <fullName evidence="1">Argininosuccinate lyase</fullName>
        <shortName evidence="1">ASAL</shortName>
        <ecNumber evidence="1">4.3.2.1</ecNumber>
    </recommendedName>
    <alternativeName>
        <fullName evidence="1">Arginosuccinase</fullName>
    </alternativeName>
</protein>
<evidence type="ECO:0000255" key="1">
    <source>
        <dbReference type="HAMAP-Rule" id="MF_00006"/>
    </source>
</evidence>
<gene>
    <name evidence="1" type="primary">argH</name>
    <name type="ordered locus">TTE2493</name>
</gene>
<sequence length="439" mass="50496">MKLWGGRFKKDLDKLMEDFNSSISFDIRLLKYDIMGSIAHAKGLYKAGVLTEEELNLIEKGLKEILEESELKEIPQDEDVHSYVERLLVEKIGDVGRKLHTGRSRNDQVATDERLYLRDEIDKIKEDLIKLIDTLKEMAETYKETIMPGYTHLQRAQPVTFGHYLLAYVEMFKRDLSRLDDMMKRVNVMPLGSGALAGTTFNIDRYYVASLLGFDDITLNSMDGVSDRDFVIEFLSFASITMMHLSRFCEELILWSTKEFDFIEMDDRFSTGSSMMPQKKNPDAAELIRGKTGRVYGDLITILTVMKGLPLAYNKDMQEDKEALFDGIDTLKMSLKVFTEMIKTIKVKTDNMEKAAKYGYMNATDFADYLVQKGIPFRTAHEIAGKVVLYAIERNLPIEELSLEELKKFSDVIEKDVYEAIDIKNILKKRKTIGSPRIF</sequence>
<comment type="catalytic activity">
    <reaction evidence="1">
        <text>2-(N(omega)-L-arginino)succinate = fumarate + L-arginine</text>
        <dbReference type="Rhea" id="RHEA:24020"/>
        <dbReference type="ChEBI" id="CHEBI:29806"/>
        <dbReference type="ChEBI" id="CHEBI:32682"/>
        <dbReference type="ChEBI" id="CHEBI:57472"/>
        <dbReference type="EC" id="4.3.2.1"/>
    </reaction>
</comment>
<comment type="pathway">
    <text evidence="1">Amino-acid biosynthesis; L-arginine biosynthesis; L-arginine from L-ornithine and carbamoyl phosphate: step 3/3.</text>
</comment>
<comment type="subcellular location">
    <subcellularLocation>
        <location evidence="1">Cytoplasm</location>
    </subcellularLocation>
</comment>
<comment type="similarity">
    <text evidence="1">Belongs to the lyase 1 family. Argininosuccinate lyase subfamily.</text>
</comment>
<proteinExistence type="inferred from homology"/>